<accession>O62729</accession>
<comment type="function">
    <text evidence="1">Receptor for neuropeptide Y and peptide YY. The activity of this receptor is mediated by G proteins that inhibit adenylate cyclase activity. Seems to be associated with food intake. Could be involved in feeding disorders (By similarity).</text>
</comment>
<comment type="subcellular location">
    <subcellularLocation>
        <location>Cell membrane</location>
        <topology>Multi-pass membrane protein</topology>
    </subcellularLocation>
</comment>
<comment type="similarity">
    <text evidence="3">Belongs to the G-protein coupled receptor 1 family.</text>
</comment>
<organism>
    <name type="scientific">Canis lupus familiaris</name>
    <name type="common">Dog</name>
    <name type="synonym">Canis familiaris</name>
    <dbReference type="NCBI Taxonomy" id="9615"/>
    <lineage>
        <taxon>Eukaryota</taxon>
        <taxon>Metazoa</taxon>
        <taxon>Chordata</taxon>
        <taxon>Craniata</taxon>
        <taxon>Vertebrata</taxon>
        <taxon>Euteleostomi</taxon>
        <taxon>Mammalia</taxon>
        <taxon>Eutheria</taxon>
        <taxon>Laurasiatheria</taxon>
        <taxon>Carnivora</taxon>
        <taxon>Caniformia</taxon>
        <taxon>Canidae</taxon>
        <taxon>Canis</taxon>
    </lineage>
</organism>
<evidence type="ECO:0000250" key="1"/>
<evidence type="ECO:0000255" key="2"/>
<evidence type="ECO:0000255" key="3">
    <source>
        <dbReference type="PROSITE-ProRule" id="PRU00521"/>
    </source>
</evidence>
<feature type="chain" id="PRO_0000069938" description="Neuropeptide Y receptor type 5">
    <location>
        <begin position="1"/>
        <end position="446"/>
    </location>
</feature>
<feature type="topological domain" description="Extracellular" evidence="2">
    <location>
        <begin position="1"/>
        <end position="42"/>
    </location>
</feature>
<feature type="transmembrane region" description="Helical; Name=1" evidence="2">
    <location>
        <begin position="43"/>
        <end position="63"/>
    </location>
</feature>
<feature type="topological domain" description="Cytoplasmic" evidence="2">
    <location>
        <begin position="64"/>
        <end position="77"/>
    </location>
</feature>
<feature type="transmembrane region" description="Helical; Name=2" evidence="2">
    <location>
        <begin position="78"/>
        <end position="98"/>
    </location>
</feature>
<feature type="topological domain" description="Extracellular" evidence="2">
    <location>
        <begin position="99"/>
        <end position="117"/>
    </location>
</feature>
<feature type="transmembrane region" description="Helical; Name=3" evidence="2">
    <location>
        <begin position="118"/>
        <end position="138"/>
    </location>
</feature>
<feature type="topological domain" description="Cytoplasmic" evidence="2">
    <location>
        <begin position="139"/>
        <end position="156"/>
    </location>
</feature>
<feature type="transmembrane region" description="Helical; Name=4" evidence="2">
    <location>
        <begin position="157"/>
        <end position="177"/>
    </location>
</feature>
<feature type="topological domain" description="Extracellular" evidence="2">
    <location>
        <begin position="178"/>
        <end position="208"/>
    </location>
</feature>
<feature type="transmembrane region" description="Helical; Name=5" evidence="2">
    <location>
        <begin position="209"/>
        <end position="229"/>
    </location>
</feature>
<feature type="topological domain" description="Cytoplasmic" evidence="2">
    <location>
        <begin position="230"/>
        <end position="369"/>
    </location>
</feature>
<feature type="transmembrane region" description="Helical; Name=6" evidence="2">
    <location>
        <begin position="370"/>
        <end position="390"/>
    </location>
</feature>
<feature type="topological domain" description="Extracellular" evidence="2">
    <location>
        <begin position="391"/>
        <end position="407"/>
    </location>
</feature>
<feature type="transmembrane region" description="Helical; Name=7" evidence="2">
    <location>
        <begin position="408"/>
        <end position="428"/>
    </location>
</feature>
<feature type="topological domain" description="Cytoplasmic" evidence="2">
    <location>
        <begin position="429"/>
        <end position="446"/>
    </location>
</feature>
<feature type="lipid moiety-binding region" description="S-palmitoyl cysteine" evidence="2">
    <location>
        <position position="442"/>
    </location>
</feature>
<feature type="glycosylation site" description="N-linked (GlcNAc...) asparagine" evidence="2">
    <location>
        <position position="10"/>
    </location>
</feature>
<feature type="glycosylation site" description="N-linked (GlcNAc...) asparagine" evidence="2">
    <location>
        <position position="17"/>
    </location>
</feature>
<feature type="disulfide bond" evidence="3">
    <location>
        <begin position="114"/>
        <end position="198"/>
    </location>
</feature>
<gene>
    <name type="primary">NPY5R</name>
    <name type="synonym">NPY5</name>
</gene>
<keyword id="KW-1003">Cell membrane</keyword>
<keyword id="KW-1015">Disulfide bond</keyword>
<keyword id="KW-0297">G-protein coupled receptor</keyword>
<keyword id="KW-0325">Glycoprotein</keyword>
<keyword id="KW-0449">Lipoprotein</keyword>
<keyword id="KW-0472">Membrane</keyword>
<keyword id="KW-0564">Palmitate</keyword>
<keyword id="KW-0675">Receptor</keyword>
<keyword id="KW-1185">Reference proteome</keyword>
<keyword id="KW-0807">Transducer</keyword>
<keyword id="KW-0812">Transmembrane</keyword>
<keyword id="KW-1133">Transmembrane helix</keyword>
<reference key="1">
    <citation type="journal article" date="1998" name="Regul. Pept.">
        <title>Molecular biology and pharmacology of multiple NPY Y5 receptor species homologs.</title>
        <authorList>
            <person name="Borowsky B."/>
            <person name="Walker M.W."/>
            <person name="Bard J."/>
            <person name="Weinshank R.L."/>
            <person name="Laz T.M."/>
            <person name="Vaysse P."/>
            <person name="Branchek T.A."/>
            <person name="Gerald C."/>
        </authorList>
    </citation>
    <scope>NUCLEOTIDE SEQUENCE [MRNA]</scope>
</reference>
<sequence length="446" mass="51013">MDLELQDFYNKTLATENNTAATRNSDFPVWDDYKSSVDDLQYFLIGLYTFVSLLGFMGNLLILMALMRKRNQKTMVNFLIGNLAFSDILVVLFCSPFTLTSVLLDQWMFGKVMCHIMPFLQCVSVLVSTLILISIAIVRYHMIKHPISNNLTANHGYFLIATVWTLGFAICSPLPVFHSLVELQETFDSALLSSRYLCVESWPSDSYRIAFTISLLLVQYILPLVCLTVSHTSVCRSISCGLSNKENKLEENEMINLTLQPFKKSGPQVKLSSSHKWSYSFIRKHRRRYSKKTACVLPAPARPPQENHSRMLPENFGSVRSQHSSSSKFIPGVPTCFEVKPEENSDVHDMRVNRSIMRIKKRSRSVFYRLTILILVFAVSWMPLHLFHVVTDFNDNLISNRHFKLVYCICHLLGMMSCCLNPILYGFLNNGIKADLISLIQCLHMS</sequence>
<proteinExistence type="evidence at transcript level"/>
<name>NPY5R_CANLF</name>
<dbReference type="EMBL" id="AF049328">
    <property type="protein sequence ID" value="AAC17838.1"/>
    <property type="molecule type" value="mRNA"/>
</dbReference>
<dbReference type="RefSeq" id="NP_001003118.1">
    <property type="nucleotide sequence ID" value="NM_001003118.1"/>
</dbReference>
<dbReference type="RefSeq" id="XP_038543094.1">
    <property type="nucleotide sequence ID" value="XM_038687166.1"/>
</dbReference>
<dbReference type="RefSeq" id="XP_038543095.1">
    <property type="nucleotide sequence ID" value="XM_038687167.1"/>
</dbReference>
<dbReference type="SMR" id="O62729"/>
<dbReference type="FunCoup" id="O62729">
    <property type="interactions" value="144"/>
</dbReference>
<dbReference type="STRING" id="9615.ENSCAFP00000036624"/>
<dbReference type="GlyCosmos" id="O62729">
    <property type="glycosylation" value="2 sites, No reported glycans"/>
</dbReference>
<dbReference type="PaxDb" id="9615-ENSCAFP00000036624"/>
<dbReference type="Ensembl" id="ENSCAFT00845011461.1">
    <property type="protein sequence ID" value="ENSCAFP00845008953.1"/>
    <property type="gene ID" value="ENSCAFG00845006457.1"/>
</dbReference>
<dbReference type="GeneID" id="403712"/>
<dbReference type="KEGG" id="cfa:403712"/>
<dbReference type="CTD" id="4889"/>
<dbReference type="VEuPathDB" id="HostDB:ENSCAFG00845006457"/>
<dbReference type="VGNC" id="VGNC:54273">
    <property type="gene designation" value="NPY5R"/>
</dbReference>
<dbReference type="eggNOG" id="KOG3656">
    <property type="taxonomic scope" value="Eukaryota"/>
</dbReference>
<dbReference type="GeneTree" id="ENSGT00940000161766"/>
<dbReference type="InParanoid" id="O62729"/>
<dbReference type="OrthoDB" id="5981855at2759"/>
<dbReference type="Reactome" id="R-CFA-375276">
    <property type="pathway name" value="Peptide ligand-binding receptors"/>
</dbReference>
<dbReference type="Reactome" id="R-CFA-418594">
    <property type="pathway name" value="G alpha (i) signalling events"/>
</dbReference>
<dbReference type="Proteomes" id="UP000002254">
    <property type="component" value="Unplaced"/>
</dbReference>
<dbReference type="Proteomes" id="UP000694429">
    <property type="component" value="Unplaced"/>
</dbReference>
<dbReference type="Proteomes" id="UP000694542">
    <property type="component" value="Unplaced"/>
</dbReference>
<dbReference type="Proteomes" id="UP000805418">
    <property type="component" value="Chromosome 15"/>
</dbReference>
<dbReference type="GO" id="GO:0098982">
    <property type="term" value="C:GABA-ergic synapse"/>
    <property type="evidence" value="ECO:0007669"/>
    <property type="project" value="Ensembl"/>
</dbReference>
<dbReference type="GO" id="GO:0043005">
    <property type="term" value="C:neuron projection"/>
    <property type="evidence" value="ECO:0000318"/>
    <property type="project" value="GO_Central"/>
</dbReference>
<dbReference type="GO" id="GO:0005886">
    <property type="term" value="C:plasma membrane"/>
    <property type="evidence" value="ECO:0000318"/>
    <property type="project" value="GO_Central"/>
</dbReference>
<dbReference type="GO" id="GO:0098793">
    <property type="term" value="C:presynapse"/>
    <property type="evidence" value="ECO:0007669"/>
    <property type="project" value="Ensembl"/>
</dbReference>
<dbReference type="GO" id="GO:0042923">
    <property type="term" value="F:neuropeptide binding"/>
    <property type="evidence" value="ECO:0000318"/>
    <property type="project" value="GO_Central"/>
</dbReference>
<dbReference type="GO" id="GO:0001602">
    <property type="term" value="F:pancreatic polypeptide receptor activity"/>
    <property type="evidence" value="ECO:0000318"/>
    <property type="project" value="GO_Central"/>
</dbReference>
<dbReference type="GO" id="GO:0001601">
    <property type="term" value="F:peptide YY receptor activity"/>
    <property type="evidence" value="ECO:0000318"/>
    <property type="project" value="GO_Central"/>
</dbReference>
<dbReference type="GO" id="GO:0003214">
    <property type="term" value="P:cardiac left ventricle morphogenesis"/>
    <property type="evidence" value="ECO:0007669"/>
    <property type="project" value="Ensembl"/>
</dbReference>
<dbReference type="GO" id="GO:0007268">
    <property type="term" value="P:chemical synaptic transmission"/>
    <property type="evidence" value="ECO:0000318"/>
    <property type="project" value="GO_Central"/>
</dbReference>
<dbReference type="GO" id="GO:0007186">
    <property type="term" value="P:G protein-coupled receptor signaling pathway"/>
    <property type="evidence" value="ECO:0000318"/>
    <property type="project" value="GO_Central"/>
</dbReference>
<dbReference type="GO" id="GO:0003151">
    <property type="term" value="P:outflow tract morphogenesis"/>
    <property type="evidence" value="ECO:0007669"/>
    <property type="project" value="Ensembl"/>
</dbReference>
<dbReference type="GO" id="GO:0099538">
    <property type="term" value="P:synaptic signaling via neuropeptide"/>
    <property type="evidence" value="ECO:0007669"/>
    <property type="project" value="Ensembl"/>
</dbReference>
<dbReference type="CDD" id="cd15398">
    <property type="entry name" value="7tmA_NPY5R"/>
    <property type="match status" value="1"/>
</dbReference>
<dbReference type="Gene3D" id="1.20.1070.10">
    <property type="entry name" value="Rhodopsin 7-helix transmembrane proteins"/>
    <property type="match status" value="1"/>
</dbReference>
<dbReference type="InterPro" id="IPR000276">
    <property type="entry name" value="GPCR_Rhodpsn"/>
</dbReference>
<dbReference type="InterPro" id="IPR017452">
    <property type="entry name" value="GPCR_Rhodpsn_7TM"/>
</dbReference>
<dbReference type="InterPro" id="IPR000393">
    <property type="entry name" value="NPY5_rcpt"/>
</dbReference>
<dbReference type="InterPro" id="IPR000611">
    <property type="entry name" value="NPY_rcpt"/>
</dbReference>
<dbReference type="PANTHER" id="PTHR24235">
    <property type="entry name" value="NEUROPEPTIDE Y RECEPTOR"/>
    <property type="match status" value="1"/>
</dbReference>
<dbReference type="PANTHER" id="PTHR24235:SF10">
    <property type="entry name" value="NEUROPEPTIDE Y RECEPTOR TYPE 5"/>
    <property type="match status" value="1"/>
</dbReference>
<dbReference type="Pfam" id="PF00001">
    <property type="entry name" value="7tm_1"/>
    <property type="match status" value="1"/>
</dbReference>
<dbReference type="PRINTS" id="PR00237">
    <property type="entry name" value="GPCRRHODOPSN"/>
</dbReference>
<dbReference type="PRINTS" id="PR01016">
    <property type="entry name" value="NRPEPTIDEY5R"/>
</dbReference>
<dbReference type="PRINTS" id="PR01012">
    <property type="entry name" value="NRPEPTIDEYR"/>
</dbReference>
<dbReference type="SUPFAM" id="SSF81321">
    <property type="entry name" value="Family A G protein-coupled receptor-like"/>
    <property type="match status" value="1"/>
</dbReference>
<dbReference type="PROSITE" id="PS50262">
    <property type="entry name" value="G_PROTEIN_RECEP_F1_2"/>
    <property type="match status" value="1"/>
</dbReference>
<protein>
    <recommendedName>
        <fullName>Neuropeptide Y receptor type 5</fullName>
        <shortName>NPY5-R</shortName>
    </recommendedName>
    <alternativeName>
        <fullName>NPY-Y5 receptor</fullName>
        <shortName>NPYY5-R</shortName>
        <shortName>Y5 receptor</shortName>
    </alternativeName>
</protein>